<gene>
    <name evidence="1" type="primary">astE</name>
    <name type="ordered locus">EcHS_A1827</name>
</gene>
<proteinExistence type="inferred from homology"/>
<organism>
    <name type="scientific">Escherichia coli O9:H4 (strain HS)</name>
    <dbReference type="NCBI Taxonomy" id="331112"/>
    <lineage>
        <taxon>Bacteria</taxon>
        <taxon>Pseudomonadati</taxon>
        <taxon>Pseudomonadota</taxon>
        <taxon>Gammaproteobacteria</taxon>
        <taxon>Enterobacterales</taxon>
        <taxon>Enterobacteriaceae</taxon>
        <taxon>Escherichia</taxon>
    </lineage>
</organism>
<protein>
    <recommendedName>
        <fullName evidence="1">Succinylglutamate desuccinylase</fullName>
        <ecNumber evidence="1">3.5.1.96</ecNumber>
    </recommendedName>
</protein>
<evidence type="ECO:0000255" key="1">
    <source>
        <dbReference type="HAMAP-Rule" id="MF_00767"/>
    </source>
</evidence>
<keyword id="KW-0056">Arginine metabolism</keyword>
<keyword id="KW-0378">Hydrolase</keyword>
<keyword id="KW-0479">Metal-binding</keyword>
<keyword id="KW-0862">Zinc</keyword>
<reference key="1">
    <citation type="journal article" date="2008" name="J. Bacteriol.">
        <title>The pangenome structure of Escherichia coli: comparative genomic analysis of E. coli commensal and pathogenic isolates.</title>
        <authorList>
            <person name="Rasko D.A."/>
            <person name="Rosovitz M.J."/>
            <person name="Myers G.S.A."/>
            <person name="Mongodin E.F."/>
            <person name="Fricke W.F."/>
            <person name="Gajer P."/>
            <person name="Crabtree J."/>
            <person name="Sebaihia M."/>
            <person name="Thomson N.R."/>
            <person name="Chaudhuri R."/>
            <person name="Henderson I.R."/>
            <person name="Sperandio V."/>
            <person name="Ravel J."/>
        </authorList>
    </citation>
    <scope>NUCLEOTIDE SEQUENCE [LARGE SCALE GENOMIC DNA]</scope>
    <source>
        <strain>HS</strain>
    </source>
</reference>
<sequence>MDNFLALTLTGKKPVITEREINGVRWRWLGDGVLELTPLTPPQGALVISAGIHGNETAPVEMLDALLGAISHGEIPLRWRLLVILGNPPALKQGKRYCHSDMNRMFGGRWQLFAESGETCRARELEQCLEDFYDQGKESVRWHLDLHTAIRGSLHPQFGVLPQRDIPWDEKFLTWLGAAGLEALVFHQEPGGTFTHFSARHFGALACTLELGKALPFGQNDLRQFAVTASAIAALLSGESVGIVRTPPLRYRVVSQITRHSPSFEMHMASDTLNFMPFEKGTLLAQDGEERFTVTHDVEYVLFPNPLVALGLRAGLMLEKIS</sequence>
<comment type="function">
    <text evidence="1">Transforms N(2)-succinylglutamate into succinate and glutamate.</text>
</comment>
<comment type="catalytic activity">
    <reaction evidence="1">
        <text>N-succinyl-L-glutamate + H2O = L-glutamate + succinate</text>
        <dbReference type="Rhea" id="RHEA:15169"/>
        <dbReference type="ChEBI" id="CHEBI:15377"/>
        <dbReference type="ChEBI" id="CHEBI:29985"/>
        <dbReference type="ChEBI" id="CHEBI:30031"/>
        <dbReference type="ChEBI" id="CHEBI:58763"/>
        <dbReference type="EC" id="3.5.1.96"/>
    </reaction>
</comment>
<comment type="cofactor">
    <cofactor evidence="1">
        <name>Zn(2+)</name>
        <dbReference type="ChEBI" id="CHEBI:29105"/>
    </cofactor>
    <text evidence="1">Binds 1 zinc ion per subunit.</text>
</comment>
<comment type="pathway">
    <text evidence="1">Amino-acid degradation; L-arginine degradation via AST pathway; L-glutamate and succinate from L-arginine: step 5/5.</text>
</comment>
<comment type="similarity">
    <text evidence="1">Belongs to the AspA/AstE family. Succinylglutamate desuccinylase subfamily.</text>
</comment>
<feature type="chain" id="PRO_1000062232" description="Succinylglutamate desuccinylase">
    <location>
        <begin position="1"/>
        <end position="322"/>
    </location>
</feature>
<feature type="active site" evidence="1">
    <location>
        <position position="210"/>
    </location>
</feature>
<feature type="binding site" evidence="1">
    <location>
        <position position="53"/>
    </location>
    <ligand>
        <name>Zn(2+)</name>
        <dbReference type="ChEBI" id="CHEBI:29105"/>
    </ligand>
</feature>
<feature type="binding site" evidence="1">
    <location>
        <position position="56"/>
    </location>
    <ligand>
        <name>Zn(2+)</name>
        <dbReference type="ChEBI" id="CHEBI:29105"/>
    </ligand>
</feature>
<feature type="binding site" evidence="1">
    <location>
        <position position="147"/>
    </location>
    <ligand>
        <name>Zn(2+)</name>
        <dbReference type="ChEBI" id="CHEBI:29105"/>
    </ligand>
</feature>
<accession>A8A0T6</accession>
<dbReference type="EC" id="3.5.1.96" evidence="1"/>
<dbReference type="EMBL" id="CP000802">
    <property type="protein sequence ID" value="ABV06140.1"/>
    <property type="molecule type" value="Genomic_DNA"/>
</dbReference>
<dbReference type="RefSeq" id="WP_000368506.1">
    <property type="nucleotide sequence ID" value="NC_009800.1"/>
</dbReference>
<dbReference type="SMR" id="A8A0T6"/>
<dbReference type="KEGG" id="ecx:EcHS_A1827"/>
<dbReference type="HOGENOM" id="CLU_071608_0_0_6"/>
<dbReference type="UniPathway" id="UPA00185">
    <property type="reaction ID" value="UER00283"/>
</dbReference>
<dbReference type="GO" id="GO:0016788">
    <property type="term" value="F:hydrolase activity, acting on ester bonds"/>
    <property type="evidence" value="ECO:0007669"/>
    <property type="project" value="UniProtKB-UniRule"/>
</dbReference>
<dbReference type="GO" id="GO:0009017">
    <property type="term" value="F:succinylglutamate desuccinylase activity"/>
    <property type="evidence" value="ECO:0007669"/>
    <property type="project" value="UniProtKB-EC"/>
</dbReference>
<dbReference type="GO" id="GO:0008270">
    <property type="term" value="F:zinc ion binding"/>
    <property type="evidence" value="ECO:0007669"/>
    <property type="project" value="UniProtKB-UniRule"/>
</dbReference>
<dbReference type="GO" id="GO:0019544">
    <property type="term" value="P:arginine catabolic process to glutamate"/>
    <property type="evidence" value="ECO:0007669"/>
    <property type="project" value="UniProtKB-UniRule"/>
</dbReference>
<dbReference type="GO" id="GO:0019545">
    <property type="term" value="P:arginine catabolic process to succinate"/>
    <property type="evidence" value="ECO:0007669"/>
    <property type="project" value="UniProtKB-UniRule"/>
</dbReference>
<dbReference type="CDD" id="cd03855">
    <property type="entry name" value="M14_ASTE"/>
    <property type="match status" value="1"/>
</dbReference>
<dbReference type="FunFam" id="3.40.630.10:FF:000017">
    <property type="entry name" value="Succinylglutamate desuccinylase"/>
    <property type="match status" value="1"/>
</dbReference>
<dbReference type="Gene3D" id="3.40.630.10">
    <property type="entry name" value="Zn peptidases"/>
    <property type="match status" value="1"/>
</dbReference>
<dbReference type="HAMAP" id="MF_00767">
    <property type="entry name" value="Arg_catab_AstE"/>
    <property type="match status" value="1"/>
</dbReference>
<dbReference type="InterPro" id="IPR050178">
    <property type="entry name" value="AspA/AstE_fam"/>
</dbReference>
<dbReference type="InterPro" id="IPR055438">
    <property type="entry name" value="AstE_AspA_cat"/>
</dbReference>
<dbReference type="InterPro" id="IPR007036">
    <property type="entry name" value="Aste_AspA_hybrid_dom"/>
</dbReference>
<dbReference type="InterPro" id="IPR016681">
    <property type="entry name" value="SuccinylGlu_desuccinylase"/>
</dbReference>
<dbReference type="NCBIfam" id="TIGR03242">
    <property type="entry name" value="arg_catab_astE"/>
    <property type="match status" value="1"/>
</dbReference>
<dbReference type="NCBIfam" id="NF003706">
    <property type="entry name" value="PRK05324.1"/>
    <property type="match status" value="1"/>
</dbReference>
<dbReference type="PANTHER" id="PTHR15162">
    <property type="entry name" value="ASPARTOACYLASE"/>
    <property type="match status" value="1"/>
</dbReference>
<dbReference type="PANTHER" id="PTHR15162:SF7">
    <property type="entry name" value="SUCCINYLGLUTAMATE DESUCCINYLASE"/>
    <property type="match status" value="1"/>
</dbReference>
<dbReference type="Pfam" id="PF24827">
    <property type="entry name" value="AstE_AspA_cat"/>
    <property type="match status" value="1"/>
</dbReference>
<dbReference type="Pfam" id="PF04952">
    <property type="entry name" value="AstE_AspA_hybrid"/>
    <property type="match status" value="1"/>
</dbReference>
<dbReference type="PIRSF" id="PIRSF017020">
    <property type="entry name" value="AstE"/>
    <property type="match status" value="1"/>
</dbReference>
<dbReference type="SUPFAM" id="SSF53187">
    <property type="entry name" value="Zn-dependent exopeptidases"/>
    <property type="match status" value="1"/>
</dbReference>
<name>ASTE_ECOHS</name>